<dbReference type="EC" id="3.5.-.-"/>
<dbReference type="EMBL" id="AF270495">
    <property type="protein sequence ID" value="AAF76894.1"/>
    <property type="molecule type" value="mRNA"/>
</dbReference>
<dbReference type="EMBL" id="AK033916">
    <property type="protein sequence ID" value="BAC28513.1"/>
    <property type="molecule type" value="mRNA"/>
</dbReference>
<dbReference type="EMBL" id="AK139079">
    <property type="protein sequence ID" value="BAE23882.1"/>
    <property type="molecule type" value="mRNA"/>
</dbReference>
<dbReference type="EMBL" id="AK139273">
    <property type="protein sequence ID" value="BAE23939.1"/>
    <property type="molecule type" value="mRNA"/>
</dbReference>
<dbReference type="EMBL" id="BC052426">
    <property type="protein sequence ID" value="AAH52426.1"/>
    <property type="molecule type" value="mRNA"/>
</dbReference>
<dbReference type="EMBL" id="AF232942">
    <property type="protein sequence ID" value="AAF78580.1"/>
    <property type="molecule type" value="mRNA"/>
</dbReference>
<dbReference type="CCDS" id="CCDS26231.1"/>
<dbReference type="RefSeq" id="NP_443209.2">
    <property type="nucleotide sequence ID" value="NM_052977.5"/>
</dbReference>
<dbReference type="SMR" id="Q9JI20"/>
<dbReference type="FunCoup" id="Q9JI20">
    <property type="interactions" value="699"/>
</dbReference>
<dbReference type="STRING" id="10090.ENSMUSP00000064775"/>
<dbReference type="iPTMnet" id="Q9JI20"/>
<dbReference type="PhosphoSitePlus" id="Q9JI20"/>
<dbReference type="PaxDb" id="10090-ENSMUSP00000064775"/>
<dbReference type="ProteomicsDB" id="255281"/>
<dbReference type="Antibodypedia" id="23825">
    <property type="antibodies" value="40 antibodies from 19 providers"/>
</dbReference>
<dbReference type="DNASU" id="94191"/>
<dbReference type="Ensembl" id="ENSMUST00000064473.13">
    <property type="protein sequence ID" value="ENSMUSP00000064775.7"/>
    <property type="gene ID" value="ENSMUSG00000052551.17"/>
</dbReference>
<dbReference type="Ensembl" id="ENSMUST00000135574.8">
    <property type="protein sequence ID" value="ENSMUSP00000115148.2"/>
    <property type="gene ID" value="ENSMUSG00000052551.17"/>
</dbReference>
<dbReference type="GeneID" id="94191"/>
<dbReference type="KEGG" id="mmu:94191"/>
<dbReference type="UCSC" id="uc007pkf.2">
    <property type="organism name" value="mouse"/>
</dbReference>
<dbReference type="AGR" id="MGI:2151118"/>
<dbReference type="CTD" id="105"/>
<dbReference type="MGI" id="MGI:2151118">
    <property type="gene designation" value="Adarb2"/>
</dbReference>
<dbReference type="VEuPathDB" id="HostDB:ENSMUSG00000052551"/>
<dbReference type="eggNOG" id="KOG2777">
    <property type="taxonomic scope" value="Eukaryota"/>
</dbReference>
<dbReference type="GeneTree" id="ENSGT00940000157252"/>
<dbReference type="HOGENOM" id="CLU_005382_3_1_1"/>
<dbReference type="InParanoid" id="Q9JI20"/>
<dbReference type="OMA" id="VMSHRTE"/>
<dbReference type="OrthoDB" id="10268011at2759"/>
<dbReference type="PhylomeDB" id="Q9JI20"/>
<dbReference type="TreeFam" id="TF315806"/>
<dbReference type="BioGRID-ORCS" id="94191">
    <property type="hits" value="1 hit in 77 CRISPR screens"/>
</dbReference>
<dbReference type="ChiTaRS" id="Adarb2">
    <property type="organism name" value="mouse"/>
</dbReference>
<dbReference type="PRO" id="PR:Q9JI20"/>
<dbReference type="Proteomes" id="UP000000589">
    <property type="component" value="Chromosome 13"/>
</dbReference>
<dbReference type="RNAct" id="Q9JI20">
    <property type="molecule type" value="protein"/>
</dbReference>
<dbReference type="Bgee" id="ENSMUSG00000052551">
    <property type="expression patterns" value="Expressed in lateral geniculate body and 122 other cell types or tissues"/>
</dbReference>
<dbReference type="ExpressionAtlas" id="Q9JI20">
    <property type="expression patterns" value="baseline and differential"/>
</dbReference>
<dbReference type="GO" id="GO:0005634">
    <property type="term" value="C:nucleus"/>
    <property type="evidence" value="ECO:0007669"/>
    <property type="project" value="UniProtKB-SubCell"/>
</dbReference>
<dbReference type="GO" id="GO:0004000">
    <property type="term" value="F:adenosine deaminase activity"/>
    <property type="evidence" value="ECO:0007669"/>
    <property type="project" value="InterPro"/>
</dbReference>
<dbReference type="GO" id="GO:0046872">
    <property type="term" value="F:metal ion binding"/>
    <property type="evidence" value="ECO:0007669"/>
    <property type="project" value="UniProtKB-KW"/>
</dbReference>
<dbReference type="GO" id="GO:0003723">
    <property type="term" value="F:RNA binding"/>
    <property type="evidence" value="ECO:0007669"/>
    <property type="project" value="UniProtKB-KW"/>
</dbReference>
<dbReference type="GO" id="GO:0006397">
    <property type="term" value="P:mRNA processing"/>
    <property type="evidence" value="ECO:0007669"/>
    <property type="project" value="UniProtKB-KW"/>
</dbReference>
<dbReference type="CDD" id="cd19896">
    <property type="entry name" value="DSRM_RED2_rpt1"/>
    <property type="match status" value="1"/>
</dbReference>
<dbReference type="FunFam" id="3.30.160.20:FF:000009">
    <property type="entry name" value="Adenosine deaminase RNA-specific B2 (inactive)"/>
    <property type="match status" value="1"/>
</dbReference>
<dbReference type="FunFam" id="3.30.160.20:FF:000011">
    <property type="entry name" value="double-stranded RNA-specific editase 1 isoform X1"/>
    <property type="match status" value="1"/>
</dbReference>
<dbReference type="Gene3D" id="3.30.160.20">
    <property type="match status" value="2"/>
</dbReference>
<dbReference type="InterPro" id="IPR002466">
    <property type="entry name" value="A_deamin"/>
</dbReference>
<dbReference type="InterPro" id="IPR044460">
    <property type="entry name" value="ADAR3_DSRM_1"/>
</dbReference>
<dbReference type="InterPro" id="IPR014720">
    <property type="entry name" value="dsRBD_dom"/>
</dbReference>
<dbReference type="PANTHER" id="PTHR10910:SF17">
    <property type="entry name" value="DOUBLE-STRANDED RNA-SPECIFIC EDITASE B2"/>
    <property type="match status" value="1"/>
</dbReference>
<dbReference type="PANTHER" id="PTHR10910">
    <property type="entry name" value="EUKARYOTE SPECIFIC DSRNA BINDING PROTEIN"/>
    <property type="match status" value="1"/>
</dbReference>
<dbReference type="Pfam" id="PF02137">
    <property type="entry name" value="A_deamin"/>
    <property type="match status" value="1"/>
</dbReference>
<dbReference type="Pfam" id="PF00035">
    <property type="entry name" value="dsrm"/>
    <property type="match status" value="2"/>
</dbReference>
<dbReference type="SMART" id="SM00552">
    <property type="entry name" value="ADEAMc"/>
    <property type="match status" value="1"/>
</dbReference>
<dbReference type="SMART" id="SM00358">
    <property type="entry name" value="DSRM"/>
    <property type="match status" value="2"/>
</dbReference>
<dbReference type="SUPFAM" id="SSF54768">
    <property type="entry name" value="dsRNA-binding domain-like"/>
    <property type="match status" value="2"/>
</dbReference>
<dbReference type="PROSITE" id="PS50141">
    <property type="entry name" value="A_DEAMIN_EDITASE"/>
    <property type="match status" value="1"/>
</dbReference>
<dbReference type="PROSITE" id="PS50137">
    <property type="entry name" value="DS_RBD"/>
    <property type="match status" value="2"/>
</dbReference>
<feature type="chain" id="PRO_0000171783" description="Double-stranded RNA-specific editase B2">
    <location>
        <begin position="1"/>
        <end position="745"/>
    </location>
</feature>
<feature type="domain" description="DRBM 1" evidence="3">
    <location>
        <begin position="125"/>
        <end position="191"/>
    </location>
</feature>
<feature type="domain" description="DRBM 2" evidence="3">
    <location>
        <begin position="283"/>
        <end position="347"/>
    </location>
</feature>
<feature type="domain" description="A to I editase" evidence="2">
    <location>
        <begin position="414"/>
        <end position="741"/>
    </location>
</feature>
<feature type="region of interest" description="Disordered" evidence="4">
    <location>
        <begin position="1"/>
        <end position="35"/>
    </location>
</feature>
<feature type="region of interest" description="R-domain (ssRNA-binding)" evidence="1">
    <location>
        <begin position="23"/>
        <end position="35"/>
    </location>
</feature>
<feature type="region of interest" description="Disordered" evidence="4">
    <location>
        <begin position="50"/>
        <end position="104"/>
    </location>
</feature>
<feature type="compositionally biased region" description="Basic residues" evidence="4">
    <location>
        <begin position="20"/>
        <end position="34"/>
    </location>
</feature>
<feature type="active site" description="Proton donor" evidence="2">
    <location>
        <position position="440"/>
    </location>
</feature>
<feature type="binding site" evidence="2">
    <location>
        <position position="438"/>
    </location>
    <ligand>
        <name>Zn(2+)</name>
        <dbReference type="ChEBI" id="CHEBI:29105"/>
    </ligand>
</feature>
<feature type="binding site" evidence="2">
    <location>
        <position position="496"/>
    </location>
    <ligand>
        <name>Zn(2+)</name>
        <dbReference type="ChEBI" id="CHEBI:29105"/>
    </ligand>
</feature>
<feature type="binding site" evidence="2">
    <location>
        <position position="561"/>
    </location>
    <ligand>
        <name>Zn(2+)</name>
        <dbReference type="ChEBI" id="CHEBI:29105"/>
    </ligand>
</feature>
<feature type="sequence conflict" description="In Ref. 1; AAF76894." evidence="5" ref="1">
    <original>R</original>
    <variation>G</variation>
    <location>
        <position position="25"/>
    </location>
</feature>
<feature type="sequence conflict" description="In Ref. 4; AAF78580." evidence="5" ref="4">
    <original>S</original>
    <variation>N</variation>
    <location>
        <position position="65"/>
    </location>
</feature>
<feature type="sequence conflict" description="In Ref. 1; AAF76894." evidence="5" ref="1">
    <original>K</original>
    <variation>R</variation>
    <location>
        <position position="310"/>
    </location>
</feature>
<feature type="sequence conflict" description="In Ref. 4; AAF78580." evidence="5" ref="4">
    <original>A</original>
    <variation>G</variation>
    <location>
        <position position="410"/>
    </location>
</feature>
<feature type="sequence conflict" description="In Ref. 1; AAF76894." evidence="5" ref="1">
    <original>W</original>
    <variation>R</variation>
    <location>
        <position position="731"/>
    </location>
</feature>
<reference key="1">
    <citation type="submission" date="2000-05" db="EMBL/GenBank/DDBJ databases">
        <title>Editing activity of mouse RED2 (ADAR3) in vitro.</title>
        <authorList>
            <person name="Chen M.-H."/>
            <person name="Kabir K."/>
            <person name="Yang J.-H."/>
        </authorList>
    </citation>
    <scope>NUCLEOTIDE SEQUENCE [MRNA]</scope>
    <source>
        <strain>C57BL/6J</strain>
    </source>
</reference>
<reference key="2">
    <citation type="journal article" date="2005" name="Science">
        <title>The transcriptional landscape of the mammalian genome.</title>
        <authorList>
            <person name="Carninci P."/>
            <person name="Kasukawa T."/>
            <person name="Katayama S."/>
            <person name="Gough J."/>
            <person name="Frith M.C."/>
            <person name="Maeda N."/>
            <person name="Oyama R."/>
            <person name="Ravasi T."/>
            <person name="Lenhard B."/>
            <person name="Wells C."/>
            <person name="Kodzius R."/>
            <person name="Shimokawa K."/>
            <person name="Bajic V.B."/>
            <person name="Brenner S.E."/>
            <person name="Batalov S."/>
            <person name="Forrest A.R."/>
            <person name="Zavolan M."/>
            <person name="Davis M.J."/>
            <person name="Wilming L.G."/>
            <person name="Aidinis V."/>
            <person name="Allen J.E."/>
            <person name="Ambesi-Impiombato A."/>
            <person name="Apweiler R."/>
            <person name="Aturaliya R.N."/>
            <person name="Bailey T.L."/>
            <person name="Bansal M."/>
            <person name="Baxter L."/>
            <person name="Beisel K.W."/>
            <person name="Bersano T."/>
            <person name="Bono H."/>
            <person name="Chalk A.M."/>
            <person name="Chiu K.P."/>
            <person name="Choudhary V."/>
            <person name="Christoffels A."/>
            <person name="Clutterbuck D.R."/>
            <person name="Crowe M.L."/>
            <person name="Dalla E."/>
            <person name="Dalrymple B.P."/>
            <person name="de Bono B."/>
            <person name="Della Gatta G."/>
            <person name="di Bernardo D."/>
            <person name="Down T."/>
            <person name="Engstrom P."/>
            <person name="Fagiolini M."/>
            <person name="Faulkner G."/>
            <person name="Fletcher C.F."/>
            <person name="Fukushima T."/>
            <person name="Furuno M."/>
            <person name="Futaki S."/>
            <person name="Gariboldi M."/>
            <person name="Georgii-Hemming P."/>
            <person name="Gingeras T.R."/>
            <person name="Gojobori T."/>
            <person name="Green R.E."/>
            <person name="Gustincich S."/>
            <person name="Harbers M."/>
            <person name="Hayashi Y."/>
            <person name="Hensch T.K."/>
            <person name="Hirokawa N."/>
            <person name="Hill D."/>
            <person name="Huminiecki L."/>
            <person name="Iacono M."/>
            <person name="Ikeo K."/>
            <person name="Iwama A."/>
            <person name="Ishikawa T."/>
            <person name="Jakt M."/>
            <person name="Kanapin A."/>
            <person name="Katoh M."/>
            <person name="Kawasawa Y."/>
            <person name="Kelso J."/>
            <person name="Kitamura H."/>
            <person name="Kitano H."/>
            <person name="Kollias G."/>
            <person name="Krishnan S.P."/>
            <person name="Kruger A."/>
            <person name="Kummerfeld S.K."/>
            <person name="Kurochkin I.V."/>
            <person name="Lareau L.F."/>
            <person name="Lazarevic D."/>
            <person name="Lipovich L."/>
            <person name="Liu J."/>
            <person name="Liuni S."/>
            <person name="McWilliam S."/>
            <person name="Madan Babu M."/>
            <person name="Madera M."/>
            <person name="Marchionni L."/>
            <person name="Matsuda H."/>
            <person name="Matsuzawa S."/>
            <person name="Miki H."/>
            <person name="Mignone F."/>
            <person name="Miyake S."/>
            <person name="Morris K."/>
            <person name="Mottagui-Tabar S."/>
            <person name="Mulder N."/>
            <person name="Nakano N."/>
            <person name="Nakauchi H."/>
            <person name="Ng P."/>
            <person name="Nilsson R."/>
            <person name="Nishiguchi S."/>
            <person name="Nishikawa S."/>
            <person name="Nori F."/>
            <person name="Ohara O."/>
            <person name="Okazaki Y."/>
            <person name="Orlando V."/>
            <person name="Pang K.C."/>
            <person name="Pavan W.J."/>
            <person name="Pavesi G."/>
            <person name="Pesole G."/>
            <person name="Petrovsky N."/>
            <person name="Piazza S."/>
            <person name="Reed J."/>
            <person name="Reid J.F."/>
            <person name="Ring B.Z."/>
            <person name="Ringwald M."/>
            <person name="Rost B."/>
            <person name="Ruan Y."/>
            <person name="Salzberg S.L."/>
            <person name="Sandelin A."/>
            <person name="Schneider C."/>
            <person name="Schoenbach C."/>
            <person name="Sekiguchi K."/>
            <person name="Semple C.A."/>
            <person name="Seno S."/>
            <person name="Sessa L."/>
            <person name="Sheng Y."/>
            <person name="Shibata Y."/>
            <person name="Shimada H."/>
            <person name="Shimada K."/>
            <person name="Silva D."/>
            <person name="Sinclair B."/>
            <person name="Sperling S."/>
            <person name="Stupka E."/>
            <person name="Sugiura K."/>
            <person name="Sultana R."/>
            <person name="Takenaka Y."/>
            <person name="Taki K."/>
            <person name="Tammoja K."/>
            <person name="Tan S.L."/>
            <person name="Tang S."/>
            <person name="Taylor M.S."/>
            <person name="Tegner J."/>
            <person name="Teichmann S.A."/>
            <person name="Ueda H.R."/>
            <person name="van Nimwegen E."/>
            <person name="Verardo R."/>
            <person name="Wei C.L."/>
            <person name="Yagi K."/>
            <person name="Yamanishi H."/>
            <person name="Zabarovsky E."/>
            <person name="Zhu S."/>
            <person name="Zimmer A."/>
            <person name="Hide W."/>
            <person name="Bult C."/>
            <person name="Grimmond S.M."/>
            <person name="Teasdale R.D."/>
            <person name="Liu E.T."/>
            <person name="Brusic V."/>
            <person name="Quackenbush J."/>
            <person name="Wahlestedt C."/>
            <person name="Mattick J.S."/>
            <person name="Hume D.A."/>
            <person name="Kai C."/>
            <person name="Sasaki D."/>
            <person name="Tomaru Y."/>
            <person name="Fukuda S."/>
            <person name="Kanamori-Katayama M."/>
            <person name="Suzuki M."/>
            <person name="Aoki J."/>
            <person name="Arakawa T."/>
            <person name="Iida J."/>
            <person name="Imamura K."/>
            <person name="Itoh M."/>
            <person name="Kato T."/>
            <person name="Kawaji H."/>
            <person name="Kawagashira N."/>
            <person name="Kawashima T."/>
            <person name="Kojima M."/>
            <person name="Kondo S."/>
            <person name="Konno H."/>
            <person name="Nakano K."/>
            <person name="Ninomiya N."/>
            <person name="Nishio T."/>
            <person name="Okada M."/>
            <person name="Plessy C."/>
            <person name="Shibata K."/>
            <person name="Shiraki T."/>
            <person name="Suzuki S."/>
            <person name="Tagami M."/>
            <person name="Waki K."/>
            <person name="Watahiki A."/>
            <person name="Okamura-Oho Y."/>
            <person name="Suzuki H."/>
            <person name="Kawai J."/>
            <person name="Hayashizaki Y."/>
        </authorList>
    </citation>
    <scope>NUCLEOTIDE SEQUENCE [LARGE SCALE MRNA]</scope>
    <source>
        <strain>C57BL/6J</strain>
        <tissue>Cerebellum</tissue>
        <tissue>Diencephalon</tissue>
    </source>
</reference>
<reference key="3">
    <citation type="journal article" date="2004" name="Genome Res.">
        <title>The status, quality, and expansion of the NIH full-length cDNA project: the Mammalian Gene Collection (MGC).</title>
        <authorList>
            <consortium name="The MGC Project Team"/>
        </authorList>
    </citation>
    <scope>NUCLEOTIDE SEQUENCE [LARGE SCALE MRNA]</scope>
    <source>
        <strain>C57BL/6J</strain>
        <tissue>Brain</tissue>
    </source>
</reference>
<reference key="4">
    <citation type="journal article" date="2000" name="Gene">
        <title>Comparative analysis of the RED1 and RED2 A-to-I RNA editing genes from mammals, pufferfish and zebrafish.</title>
        <authorList>
            <person name="Slavov D."/>
            <person name="Clark M."/>
            <person name="Gardiner K."/>
        </authorList>
    </citation>
    <scope>NUCLEOTIDE SEQUENCE [MRNA] OF 11-741</scope>
    <source>
        <tissue>Brain</tissue>
    </source>
</reference>
<protein>
    <recommendedName>
        <fullName>Double-stranded RNA-specific editase B2</fullName>
        <ecNumber>3.5.-.-</ecNumber>
    </recommendedName>
    <alternativeName>
        <fullName>RNA-dependent adenosine deaminase 3</fullName>
    </alternativeName>
    <alternativeName>
        <fullName>RNA-editing deaminase 2</fullName>
    </alternativeName>
    <alternativeName>
        <fullName>RNA-editing enzyme 2</fullName>
    </alternativeName>
    <alternativeName>
        <fullName>dsRNA adenosine deaminase B2</fullName>
    </alternativeName>
</protein>
<evidence type="ECO:0000250" key="1"/>
<evidence type="ECO:0000255" key="2">
    <source>
        <dbReference type="PROSITE-ProRule" id="PRU00240"/>
    </source>
</evidence>
<evidence type="ECO:0000255" key="3">
    <source>
        <dbReference type="PROSITE-ProRule" id="PRU00266"/>
    </source>
</evidence>
<evidence type="ECO:0000256" key="4">
    <source>
        <dbReference type="SAM" id="MobiDB-lite"/>
    </source>
</evidence>
<evidence type="ECO:0000305" key="5"/>
<organism>
    <name type="scientific">Mus musculus</name>
    <name type="common">Mouse</name>
    <dbReference type="NCBI Taxonomy" id="10090"/>
    <lineage>
        <taxon>Eukaryota</taxon>
        <taxon>Metazoa</taxon>
        <taxon>Chordata</taxon>
        <taxon>Craniata</taxon>
        <taxon>Vertebrata</taxon>
        <taxon>Euteleostomi</taxon>
        <taxon>Mammalia</taxon>
        <taxon>Eutheria</taxon>
        <taxon>Euarchontoglires</taxon>
        <taxon>Glires</taxon>
        <taxon>Rodentia</taxon>
        <taxon>Myomorpha</taxon>
        <taxon>Muroidea</taxon>
        <taxon>Muridae</taxon>
        <taxon>Murinae</taxon>
        <taxon>Mus</taxon>
        <taxon>Mus</taxon>
    </lineage>
</organism>
<comment type="function">
    <text evidence="1">Lacks editing activity. It prevents the binding of other ADAR enzymes to targets in vitro, and decreases the efficiency of these enzymes. Capable of binding to dsRNA but also to ssRNA (By similarity).</text>
</comment>
<comment type="subcellular location">
    <subcellularLocation>
        <location evidence="1">Nucleus</location>
    </subcellularLocation>
</comment>
<comment type="tissue specificity">
    <text>Brain specific.</text>
</comment>
<accession>Q9JI20</accession>
<accession>Q3UTP1</accession>
<accession>Q8CC51</accession>
<accession>Q9JIE5</accession>
<keyword id="KW-0378">Hydrolase</keyword>
<keyword id="KW-0479">Metal-binding</keyword>
<keyword id="KW-0507">mRNA processing</keyword>
<keyword id="KW-0539">Nucleus</keyword>
<keyword id="KW-1185">Reference proteome</keyword>
<keyword id="KW-0677">Repeat</keyword>
<keyword id="KW-0694">RNA-binding</keyword>
<keyword id="KW-0862">Zinc</keyword>
<gene>
    <name type="primary">Adarb2</name>
    <name type="synonym">Adar3</name>
    <name type="synonym">Red2</name>
</gene>
<proteinExistence type="evidence at transcript level"/>
<sequence length="745" mass="82187">MASVLGSGRGSGGLSSQLKCKSKRRRRRRSKRKDKVSILSTFLAPFKYLSPGTTNTEDEDNLSTSSAEVKENRNVSNLGTRPLPPGDWARGSTPSVKRKRPLEEGNGGHFCKLQLIWKKLSWSVTPKNALVQLHELKPGLQYRMVSQTGPVHAPVFAVAVEVNGLTFEGTGPTKKKAKMRAAEMALKSFVQFPNAFQAHLAMGSSTSPCTDFTSDQADFPDTLFKEFEPSSKNEDFPGCHPVDTEFLSSAYRRGRLLYHTLDLMGQALPDRSRLAPGALGERNPVVVLNELRSGLRYVCLSETAEKPRVKSFVMAVCVDGRTFEGSGRSKKLAKGQAAQAALQALFDIRLPGHIPSRSKSNLLPQDFADSVSQLVTQKFRELTVGLTSVYARHKTLAGIVMTKGLDTKQAQVIVLSSGTKCISGEHISDQGLVVNDCHAEIVARRAFLHFLYSQLELHLSKHQEDPERSIFIRLKEGGYRLRENILFHLYVSTSPCGDARVNSPYEITTDLNSSKHIVRKFRGHLRTKIESGEGTVPVRGPSAVQTWDGILLGEQLITMSCTDKIASWNVLGLQGALLCHFIEPVYLHSIIVGSLHHTGHLARVMSHRMEGIGQLPASYRQNRPLLSGVSHAEARQPGKSPHFSANWVVGSADLEIINATTGKRSCGGSSRLCKHVFSAWWARLHGRLSTRIPSHGDTPSMYCEAKQGAHTYQSVKQQLFKAFQKAGLGTWVRKPPEQDQFLLSL</sequence>
<name>RED2_MOUSE</name>